<sequence length="165" mass="18788">MAEKQAGLVGEPDPEGSSPGTSESWNYDSNCVFCRVAAGQEPKTELFHCENEDLVCFKDIKPAALYHYLVVPKKHIGSCKDLNKDHIEMVESMVAAGKTMLERNNFTDFTDVRMGFHVPPFCSISHLHLHVIAPVKEFGFLSKLVYRQDSYWFVTVDYLLEKLRK</sequence>
<name>HINT3_MOUSE</name>
<reference key="1">
    <citation type="submission" date="2001-06" db="EMBL/GenBank/DDBJ databases">
        <title>Conservation of the fourth member of the histidine triad protein family (Hint-4) in rat and mouse.</title>
        <authorList>
            <person name="Huang C.-H."/>
            <person name="Chen H."/>
            <person name="Peng J."/>
            <person name="Chen Y."/>
        </authorList>
    </citation>
    <scope>NUCLEOTIDE SEQUENCE [MRNA]</scope>
    <source>
        <strain>BALB/cJ</strain>
    </source>
</reference>
<reference key="2">
    <citation type="journal article" date="2005" name="Science">
        <title>The transcriptional landscape of the mammalian genome.</title>
        <authorList>
            <person name="Carninci P."/>
            <person name="Kasukawa T."/>
            <person name="Katayama S."/>
            <person name="Gough J."/>
            <person name="Frith M.C."/>
            <person name="Maeda N."/>
            <person name="Oyama R."/>
            <person name="Ravasi T."/>
            <person name="Lenhard B."/>
            <person name="Wells C."/>
            <person name="Kodzius R."/>
            <person name="Shimokawa K."/>
            <person name="Bajic V.B."/>
            <person name="Brenner S.E."/>
            <person name="Batalov S."/>
            <person name="Forrest A.R."/>
            <person name="Zavolan M."/>
            <person name="Davis M.J."/>
            <person name="Wilming L.G."/>
            <person name="Aidinis V."/>
            <person name="Allen J.E."/>
            <person name="Ambesi-Impiombato A."/>
            <person name="Apweiler R."/>
            <person name="Aturaliya R.N."/>
            <person name="Bailey T.L."/>
            <person name="Bansal M."/>
            <person name="Baxter L."/>
            <person name="Beisel K.W."/>
            <person name="Bersano T."/>
            <person name="Bono H."/>
            <person name="Chalk A.M."/>
            <person name="Chiu K.P."/>
            <person name="Choudhary V."/>
            <person name="Christoffels A."/>
            <person name="Clutterbuck D.R."/>
            <person name="Crowe M.L."/>
            <person name="Dalla E."/>
            <person name="Dalrymple B.P."/>
            <person name="de Bono B."/>
            <person name="Della Gatta G."/>
            <person name="di Bernardo D."/>
            <person name="Down T."/>
            <person name="Engstrom P."/>
            <person name="Fagiolini M."/>
            <person name="Faulkner G."/>
            <person name="Fletcher C.F."/>
            <person name="Fukushima T."/>
            <person name="Furuno M."/>
            <person name="Futaki S."/>
            <person name="Gariboldi M."/>
            <person name="Georgii-Hemming P."/>
            <person name="Gingeras T.R."/>
            <person name="Gojobori T."/>
            <person name="Green R.E."/>
            <person name="Gustincich S."/>
            <person name="Harbers M."/>
            <person name="Hayashi Y."/>
            <person name="Hensch T.K."/>
            <person name="Hirokawa N."/>
            <person name="Hill D."/>
            <person name="Huminiecki L."/>
            <person name="Iacono M."/>
            <person name="Ikeo K."/>
            <person name="Iwama A."/>
            <person name="Ishikawa T."/>
            <person name="Jakt M."/>
            <person name="Kanapin A."/>
            <person name="Katoh M."/>
            <person name="Kawasawa Y."/>
            <person name="Kelso J."/>
            <person name="Kitamura H."/>
            <person name="Kitano H."/>
            <person name="Kollias G."/>
            <person name="Krishnan S.P."/>
            <person name="Kruger A."/>
            <person name="Kummerfeld S.K."/>
            <person name="Kurochkin I.V."/>
            <person name="Lareau L.F."/>
            <person name="Lazarevic D."/>
            <person name="Lipovich L."/>
            <person name="Liu J."/>
            <person name="Liuni S."/>
            <person name="McWilliam S."/>
            <person name="Madan Babu M."/>
            <person name="Madera M."/>
            <person name="Marchionni L."/>
            <person name="Matsuda H."/>
            <person name="Matsuzawa S."/>
            <person name="Miki H."/>
            <person name="Mignone F."/>
            <person name="Miyake S."/>
            <person name="Morris K."/>
            <person name="Mottagui-Tabar S."/>
            <person name="Mulder N."/>
            <person name="Nakano N."/>
            <person name="Nakauchi H."/>
            <person name="Ng P."/>
            <person name="Nilsson R."/>
            <person name="Nishiguchi S."/>
            <person name="Nishikawa S."/>
            <person name="Nori F."/>
            <person name="Ohara O."/>
            <person name="Okazaki Y."/>
            <person name="Orlando V."/>
            <person name="Pang K.C."/>
            <person name="Pavan W.J."/>
            <person name="Pavesi G."/>
            <person name="Pesole G."/>
            <person name="Petrovsky N."/>
            <person name="Piazza S."/>
            <person name="Reed J."/>
            <person name="Reid J.F."/>
            <person name="Ring B.Z."/>
            <person name="Ringwald M."/>
            <person name="Rost B."/>
            <person name="Ruan Y."/>
            <person name="Salzberg S.L."/>
            <person name="Sandelin A."/>
            <person name="Schneider C."/>
            <person name="Schoenbach C."/>
            <person name="Sekiguchi K."/>
            <person name="Semple C.A."/>
            <person name="Seno S."/>
            <person name="Sessa L."/>
            <person name="Sheng Y."/>
            <person name="Shibata Y."/>
            <person name="Shimada H."/>
            <person name="Shimada K."/>
            <person name="Silva D."/>
            <person name="Sinclair B."/>
            <person name="Sperling S."/>
            <person name="Stupka E."/>
            <person name="Sugiura K."/>
            <person name="Sultana R."/>
            <person name="Takenaka Y."/>
            <person name="Taki K."/>
            <person name="Tammoja K."/>
            <person name="Tan S.L."/>
            <person name="Tang S."/>
            <person name="Taylor M.S."/>
            <person name="Tegner J."/>
            <person name="Teichmann S.A."/>
            <person name="Ueda H.R."/>
            <person name="van Nimwegen E."/>
            <person name="Verardo R."/>
            <person name="Wei C.L."/>
            <person name="Yagi K."/>
            <person name="Yamanishi H."/>
            <person name="Zabarovsky E."/>
            <person name="Zhu S."/>
            <person name="Zimmer A."/>
            <person name="Hide W."/>
            <person name="Bult C."/>
            <person name="Grimmond S.M."/>
            <person name="Teasdale R.D."/>
            <person name="Liu E.T."/>
            <person name="Brusic V."/>
            <person name="Quackenbush J."/>
            <person name="Wahlestedt C."/>
            <person name="Mattick J.S."/>
            <person name="Hume D.A."/>
            <person name="Kai C."/>
            <person name="Sasaki D."/>
            <person name="Tomaru Y."/>
            <person name="Fukuda S."/>
            <person name="Kanamori-Katayama M."/>
            <person name="Suzuki M."/>
            <person name="Aoki J."/>
            <person name="Arakawa T."/>
            <person name="Iida J."/>
            <person name="Imamura K."/>
            <person name="Itoh M."/>
            <person name="Kato T."/>
            <person name="Kawaji H."/>
            <person name="Kawagashira N."/>
            <person name="Kawashima T."/>
            <person name="Kojima M."/>
            <person name="Kondo S."/>
            <person name="Konno H."/>
            <person name="Nakano K."/>
            <person name="Ninomiya N."/>
            <person name="Nishio T."/>
            <person name="Okada M."/>
            <person name="Plessy C."/>
            <person name="Shibata K."/>
            <person name="Shiraki T."/>
            <person name="Suzuki S."/>
            <person name="Tagami M."/>
            <person name="Waki K."/>
            <person name="Watahiki A."/>
            <person name="Okamura-Oho Y."/>
            <person name="Suzuki H."/>
            <person name="Kawai J."/>
            <person name="Hayashizaki Y."/>
        </authorList>
    </citation>
    <scope>NUCLEOTIDE SEQUENCE [LARGE SCALE MRNA]</scope>
    <source>
        <strain>C57BL/6J</strain>
        <tissue>Embryo</tissue>
        <tissue>Kidney</tissue>
        <tissue>Pancreas</tissue>
    </source>
</reference>
<reference key="3">
    <citation type="journal article" date="2004" name="Genome Res.">
        <title>The status, quality, and expansion of the NIH full-length cDNA project: the Mammalian Gene Collection (MGC).</title>
        <authorList>
            <consortium name="The MGC Project Team"/>
        </authorList>
    </citation>
    <scope>NUCLEOTIDE SEQUENCE [LARGE SCALE MRNA]</scope>
    <source>
        <strain>FVB/N</strain>
        <tissue>Mammary tumor</tissue>
    </source>
</reference>
<reference key="4">
    <citation type="journal article" date="2010" name="Cell">
        <title>A tissue-specific atlas of mouse protein phosphorylation and expression.</title>
        <authorList>
            <person name="Huttlin E.L."/>
            <person name="Jedrychowski M.P."/>
            <person name="Elias J.E."/>
            <person name="Goswami T."/>
            <person name="Rad R."/>
            <person name="Beausoleil S.A."/>
            <person name="Villen J."/>
            <person name="Haas W."/>
            <person name="Sowa M.E."/>
            <person name="Gygi S.P."/>
        </authorList>
    </citation>
    <scope>IDENTIFICATION BY MASS SPECTROMETRY [LARGE SCALE ANALYSIS]</scope>
    <source>
        <tissue>Brain</tissue>
        <tissue>Brown adipose tissue</tissue>
        <tissue>Heart</tissue>
        <tissue>Kidney</tissue>
        <tissue>Liver</tissue>
        <tissue>Lung</tissue>
        <tissue>Pancreas</tissue>
        <tissue>Spleen</tissue>
        <tissue>Testis</tissue>
    </source>
</reference>
<reference key="5">
    <citation type="journal article" date="2019" name="Antioxid. Redox Signal.">
        <title>The Axonal Motor Neuropathy-Related HINT1 Protein Is a Zinc- and Calmodulin-Regulated Cysteine SUMO Protease.</title>
        <authorList>
            <person name="Cortes-Montero E."/>
            <person name="Rodriguez-Munoz M."/>
            <person name="Sanchez-Blazquez P."/>
            <person name="Garzon J."/>
        </authorList>
    </citation>
    <scope>INTERACTION WITH CALM1</scope>
</reference>
<evidence type="ECO:0000250" key="1">
    <source>
        <dbReference type="UniProtKB" id="P49773"/>
    </source>
</evidence>
<evidence type="ECO:0000250" key="2">
    <source>
        <dbReference type="UniProtKB" id="Q9NQE9"/>
    </source>
</evidence>
<evidence type="ECO:0000255" key="3">
    <source>
        <dbReference type="PROSITE-ProRule" id="PRU00464"/>
    </source>
</evidence>
<evidence type="ECO:0000256" key="4">
    <source>
        <dbReference type="SAM" id="MobiDB-lite"/>
    </source>
</evidence>
<evidence type="ECO:0000269" key="5">
    <source>
    </source>
</evidence>
<evidence type="ECO:0000305" key="6"/>
<proteinExistence type="evidence at protein level"/>
<gene>
    <name type="primary">Hint3</name>
    <name type="synonym">Hint4</name>
</gene>
<dbReference type="EC" id="3.9.1.-" evidence="2"/>
<dbReference type="EMBL" id="AY040768">
    <property type="protein sequence ID" value="AAK94778.1"/>
    <property type="molecule type" value="mRNA"/>
</dbReference>
<dbReference type="EMBL" id="AK002482">
    <property type="protein sequence ID" value="BAB22134.1"/>
    <property type="molecule type" value="mRNA"/>
</dbReference>
<dbReference type="EMBL" id="AK007758">
    <property type="protein sequence ID" value="BAB25237.1"/>
    <property type="molecule type" value="mRNA"/>
</dbReference>
<dbReference type="EMBL" id="AK027974">
    <property type="protein sequence ID" value="BAC25684.1"/>
    <property type="molecule type" value="mRNA"/>
</dbReference>
<dbReference type="EMBL" id="BC025065">
    <property type="protein sequence ID" value="AAH25065.1"/>
    <property type="molecule type" value="mRNA"/>
</dbReference>
<dbReference type="CCDS" id="CCDS23764.1"/>
<dbReference type="RefSeq" id="NP_080074.1">
    <property type="nucleotide sequence ID" value="NM_025798.3"/>
</dbReference>
<dbReference type="SMR" id="Q9CPS6"/>
<dbReference type="FunCoup" id="Q9CPS6">
    <property type="interactions" value="2915"/>
</dbReference>
<dbReference type="STRING" id="10090.ENSMUSP00000125552"/>
<dbReference type="iPTMnet" id="Q9CPS6"/>
<dbReference type="PhosphoSitePlus" id="Q9CPS6"/>
<dbReference type="SwissPalm" id="Q9CPS6"/>
<dbReference type="PaxDb" id="10090-ENSMUSP00000125552"/>
<dbReference type="PeptideAtlas" id="Q9CPS6"/>
<dbReference type="ProteomicsDB" id="273112"/>
<dbReference type="Pumba" id="Q9CPS6"/>
<dbReference type="Antibodypedia" id="32730">
    <property type="antibodies" value="74 antibodies from 18 providers"/>
</dbReference>
<dbReference type="DNASU" id="66847"/>
<dbReference type="Ensembl" id="ENSMUST00000161074.8">
    <property type="protein sequence ID" value="ENSMUSP00000125552.2"/>
    <property type="gene ID" value="ENSMUSG00000019791.13"/>
</dbReference>
<dbReference type="GeneID" id="66847"/>
<dbReference type="KEGG" id="mmu:66847"/>
<dbReference type="UCSC" id="uc007etg.1">
    <property type="organism name" value="mouse"/>
</dbReference>
<dbReference type="AGR" id="MGI:1914097"/>
<dbReference type="CTD" id="135114"/>
<dbReference type="MGI" id="MGI:1914097">
    <property type="gene designation" value="Hint3"/>
</dbReference>
<dbReference type="VEuPathDB" id="HostDB:ENSMUSG00000019791"/>
<dbReference type="eggNOG" id="KOG4359">
    <property type="taxonomic scope" value="Eukaryota"/>
</dbReference>
<dbReference type="GeneTree" id="ENSGT00510000047616"/>
<dbReference type="HOGENOM" id="CLU_056776_4_2_1"/>
<dbReference type="InParanoid" id="Q9CPS6"/>
<dbReference type="OMA" id="EKKCIFC"/>
<dbReference type="OrthoDB" id="1915375at2759"/>
<dbReference type="PhylomeDB" id="Q9CPS6"/>
<dbReference type="TreeFam" id="TF353069"/>
<dbReference type="BioGRID-ORCS" id="66847">
    <property type="hits" value="4 hits in 77 CRISPR screens"/>
</dbReference>
<dbReference type="ChiTaRS" id="Hint3">
    <property type="organism name" value="mouse"/>
</dbReference>
<dbReference type="PRO" id="PR:Q9CPS6"/>
<dbReference type="Proteomes" id="UP000000589">
    <property type="component" value="Chromosome 10"/>
</dbReference>
<dbReference type="RNAct" id="Q9CPS6">
    <property type="molecule type" value="protein"/>
</dbReference>
<dbReference type="Bgee" id="ENSMUSG00000019791">
    <property type="expression patterns" value="Expressed in interventricular septum and 245 other cell types or tissues"/>
</dbReference>
<dbReference type="ExpressionAtlas" id="Q9CPS6">
    <property type="expression patterns" value="baseline and differential"/>
</dbReference>
<dbReference type="GO" id="GO:0005737">
    <property type="term" value="C:cytoplasm"/>
    <property type="evidence" value="ECO:0007669"/>
    <property type="project" value="UniProtKB-SubCell"/>
</dbReference>
<dbReference type="GO" id="GO:0005634">
    <property type="term" value="C:nucleus"/>
    <property type="evidence" value="ECO:0007669"/>
    <property type="project" value="UniProtKB-SubCell"/>
</dbReference>
<dbReference type="GO" id="GO:0043530">
    <property type="term" value="F:adenosine 5'-monophosphoramidase activity"/>
    <property type="evidence" value="ECO:0000250"/>
    <property type="project" value="UniProtKB"/>
</dbReference>
<dbReference type="GO" id="GO:0042802">
    <property type="term" value="F:identical protein binding"/>
    <property type="evidence" value="ECO:0007669"/>
    <property type="project" value="Ensembl"/>
</dbReference>
<dbReference type="GO" id="GO:0000166">
    <property type="term" value="F:nucleotide binding"/>
    <property type="evidence" value="ECO:0007669"/>
    <property type="project" value="UniProtKB-KW"/>
</dbReference>
<dbReference type="CDD" id="cd01278">
    <property type="entry name" value="aprataxin_related"/>
    <property type="match status" value="1"/>
</dbReference>
<dbReference type="FunFam" id="3.30.428.10:FF:000020">
    <property type="entry name" value="Histidine triad nucleotide-binding protein 3"/>
    <property type="match status" value="1"/>
</dbReference>
<dbReference type="Gene3D" id="3.30.428.10">
    <property type="entry name" value="HIT-like"/>
    <property type="match status" value="1"/>
</dbReference>
<dbReference type="InterPro" id="IPR011146">
    <property type="entry name" value="HIT-like"/>
</dbReference>
<dbReference type="InterPro" id="IPR036265">
    <property type="entry name" value="HIT-like_sf"/>
</dbReference>
<dbReference type="PANTHER" id="PTHR12486:SF5">
    <property type="entry name" value="ADENOSINE 5'-MONOPHOSPHORAMIDASE HINT3"/>
    <property type="match status" value="1"/>
</dbReference>
<dbReference type="PANTHER" id="PTHR12486">
    <property type="entry name" value="APRATAXIN-RELATED"/>
    <property type="match status" value="1"/>
</dbReference>
<dbReference type="Pfam" id="PF11969">
    <property type="entry name" value="DcpS_C"/>
    <property type="match status" value="1"/>
</dbReference>
<dbReference type="SUPFAM" id="SSF54197">
    <property type="entry name" value="HIT-like"/>
    <property type="match status" value="1"/>
</dbReference>
<dbReference type="PROSITE" id="PS51084">
    <property type="entry name" value="HIT_2"/>
    <property type="match status" value="1"/>
</dbReference>
<organism>
    <name type="scientific">Mus musculus</name>
    <name type="common">Mouse</name>
    <dbReference type="NCBI Taxonomy" id="10090"/>
    <lineage>
        <taxon>Eukaryota</taxon>
        <taxon>Metazoa</taxon>
        <taxon>Chordata</taxon>
        <taxon>Craniata</taxon>
        <taxon>Vertebrata</taxon>
        <taxon>Euteleostomi</taxon>
        <taxon>Mammalia</taxon>
        <taxon>Eutheria</taxon>
        <taxon>Euarchontoglires</taxon>
        <taxon>Glires</taxon>
        <taxon>Rodentia</taxon>
        <taxon>Myomorpha</taxon>
        <taxon>Muroidea</taxon>
        <taxon>Muridae</taxon>
        <taxon>Murinae</taxon>
        <taxon>Mus</taxon>
        <taxon>Mus</taxon>
    </lineage>
</organism>
<keyword id="KW-0007">Acetylation</keyword>
<keyword id="KW-0963">Cytoplasm</keyword>
<keyword id="KW-0378">Hydrolase</keyword>
<keyword id="KW-0547">Nucleotide-binding</keyword>
<keyword id="KW-0539">Nucleus</keyword>
<keyword id="KW-1185">Reference proteome</keyword>
<accession>Q9CPS6</accession>
<protein>
    <recommendedName>
        <fullName evidence="2">Adenosine 5'-monophosphoramidase HINT3</fullName>
        <ecNumber evidence="2">3.9.1.-</ecNumber>
    </recommendedName>
    <alternativeName>
        <fullName>HINT-4</fullName>
    </alternativeName>
    <alternativeName>
        <fullName>Histidine triad nucleotide-binding protein 3</fullName>
        <shortName>HINT-3</shortName>
    </alternativeName>
</protein>
<comment type="function">
    <text evidence="2">Exhibits adenosine 5'-monophosphoramidase activity, hydrolyzing purine nucleotide phosphoramidates with a single phosphate group such as adenosine 5'monophosphoramidate (AMP-NH2) to yield AMP and NH2 (By similarity). Hydrolyzes lysyl-AMP (AMP-N-epsilon-(N-alpha-acetyl lysine methyl ester)) generated by lysine tRNA ligase (By similarity).</text>
</comment>
<comment type="catalytic activity">
    <reaction evidence="2">
        <text>adenosine 5'-phosphoramidate + H2O = AMP + NH4(+)</text>
        <dbReference type="Rhea" id="RHEA:67916"/>
        <dbReference type="ChEBI" id="CHEBI:15377"/>
        <dbReference type="ChEBI" id="CHEBI:28938"/>
        <dbReference type="ChEBI" id="CHEBI:57890"/>
        <dbReference type="ChEBI" id="CHEBI:456215"/>
    </reaction>
</comment>
<comment type="subunit">
    <text evidence="2 5">Forms dimers to octamers and even larger oligomer (By similarity). Interacts with CALM1 (PubMed:31088288).</text>
</comment>
<comment type="subcellular location">
    <subcellularLocation>
        <location evidence="2">Cytoplasm</location>
    </subcellularLocation>
    <subcellularLocation>
        <location evidence="2">Nucleus</location>
    </subcellularLocation>
</comment>
<comment type="similarity">
    <text evidence="6">Belongs to the HINT family.</text>
</comment>
<feature type="initiator methionine" description="Removed" evidence="2">
    <location>
        <position position="1"/>
    </location>
</feature>
<feature type="chain" id="PRO_0000324328" description="Adenosine 5'-monophosphoramidase HINT3">
    <location>
        <begin position="2"/>
        <end position="165"/>
    </location>
</feature>
<feature type="domain" description="HIT" evidence="3">
    <location>
        <begin position="32"/>
        <end position="143"/>
    </location>
</feature>
<feature type="region of interest" description="Disordered" evidence="4">
    <location>
        <begin position="1"/>
        <end position="23"/>
    </location>
</feature>
<feature type="short sequence motif" description="Histidine triad motif">
    <location>
        <begin position="126"/>
        <end position="130"/>
    </location>
</feature>
<feature type="active site" description="Tele-AMP-histidine intermediate" evidence="2">
    <location>
        <position position="128"/>
    </location>
</feature>
<feature type="binding site" evidence="1">
    <location>
        <begin position="59"/>
        <end position="60"/>
    </location>
    <ligand>
        <name>AMP</name>
        <dbReference type="ChEBI" id="CHEBI:456215"/>
    </ligand>
</feature>
<feature type="binding site" evidence="1">
    <location>
        <begin position="128"/>
        <end position="130"/>
    </location>
    <ligand>
        <name>AMP</name>
        <dbReference type="ChEBI" id="CHEBI:456215"/>
    </ligand>
</feature>
<feature type="modified residue" description="N-acetylalanine" evidence="2">
    <location>
        <position position="2"/>
    </location>
</feature>